<gene>
    <name type="primary">UPF1</name>
    <name type="synonym">LBA1</name>
    <name type="ordered locus">At5g47010</name>
    <name type="ORF">MQD22.15</name>
</gene>
<organism>
    <name type="scientific">Arabidopsis thaliana</name>
    <name type="common">Mouse-ear cress</name>
    <dbReference type="NCBI Taxonomy" id="3702"/>
    <lineage>
        <taxon>Eukaryota</taxon>
        <taxon>Viridiplantae</taxon>
        <taxon>Streptophyta</taxon>
        <taxon>Embryophyta</taxon>
        <taxon>Tracheophyta</taxon>
        <taxon>Spermatophyta</taxon>
        <taxon>Magnoliopsida</taxon>
        <taxon>eudicotyledons</taxon>
        <taxon>Gunneridae</taxon>
        <taxon>Pentapetalae</taxon>
        <taxon>rosids</taxon>
        <taxon>malvids</taxon>
        <taxon>Brassicales</taxon>
        <taxon>Brassicaceae</taxon>
        <taxon>Camelineae</taxon>
        <taxon>Arabidopsis</taxon>
    </lineage>
</organism>
<comment type="function">
    <text evidence="5 6 7 8 9">Involved in nonsense-mediated decay (NMD) of mRNAs containing premature stop codons (premature termination codon PTC) by associating with the nuclear exon junction complex (EJC) and serving as link between the EJC core and NMD machinery. Eliminates the production of nonsense-containing RNAs (ncRNAs). Required for plant development and adaptation to environmental stresses, including plant defense and response to wounding.</text>
</comment>
<comment type="catalytic activity">
    <reaction evidence="1">
        <text>ATP + H2O = ADP + phosphate + H(+)</text>
        <dbReference type="Rhea" id="RHEA:13065"/>
        <dbReference type="ChEBI" id="CHEBI:15377"/>
        <dbReference type="ChEBI" id="CHEBI:15378"/>
        <dbReference type="ChEBI" id="CHEBI:30616"/>
        <dbReference type="ChEBI" id="CHEBI:43474"/>
        <dbReference type="ChEBI" id="CHEBI:456216"/>
        <dbReference type="EC" id="3.6.4.12"/>
    </reaction>
    <physiologicalReaction direction="left-to-right" evidence="1">
        <dbReference type="Rhea" id="RHEA:13066"/>
    </physiologicalReaction>
</comment>
<comment type="catalytic activity">
    <reaction evidence="1">
        <text>ATP + H2O = ADP + phosphate + H(+)</text>
        <dbReference type="Rhea" id="RHEA:13065"/>
        <dbReference type="ChEBI" id="CHEBI:15377"/>
        <dbReference type="ChEBI" id="CHEBI:15378"/>
        <dbReference type="ChEBI" id="CHEBI:30616"/>
        <dbReference type="ChEBI" id="CHEBI:43474"/>
        <dbReference type="ChEBI" id="CHEBI:456216"/>
        <dbReference type="EC" id="3.6.4.13"/>
    </reaction>
    <physiologicalReaction direction="left-to-right" evidence="1">
        <dbReference type="Rhea" id="RHEA:13066"/>
    </physiologicalReaction>
</comment>
<comment type="subcellular location">
    <subcellularLocation>
        <location>Cytoplasm</location>
    </subcellularLocation>
    <subcellularLocation>
        <location>Cytoplasm</location>
        <location>P-body</location>
    </subcellularLocation>
    <text>Remobilize from the cytoplasm into processing bodies by SMG7.</text>
</comment>
<comment type="induction">
    <text evidence="6">Down-regulated upon Pseudomonas syringae pv. tomato strain DC3000 infection.</text>
</comment>
<comment type="domain">
    <text evidence="9">The helicase ATP-binding domain is implicated in early steps of nonsense-mediated decay (NMD).</text>
</comment>
<comment type="PTM">
    <text evidence="9">Highly phosphorylated in S/TQ-enriched N-terminal and C-terminal regions; required for formation of mRNA surveillance complexes.</text>
</comment>
<comment type="disruption phenotype">
    <text evidence="5 6 7 8">Seedling lethal. Increased expression of not only protein-coding transcripts but also many mRNA-like nonprotein-coding RNAs (mlncRNAs), including natural antisense transcript RNAs (nat-RNAs). Dwarf with curly leaves and late flowering. Photoperiod-dependent altered development and stress responses; in long days (16 hours light), altered organ morphologies (e.g. narrow and epinastic leaves with wide petiole, small rosette size, long seeds, some abnormal flowers and stunted stem growth), disturbed homeostasis of wounding-induced jasmonic acid and pathogen-elicited salicylic acid. Increased resistance to Pseudomonas syringae pv. tomato strain DC3000.</text>
</comment>
<comment type="similarity">
    <text evidence="10">Belongs to the DNA2/NAM7 helicase family.</text>
</comment>
<comment type="sequence caution" evidence="10">
    <conflict type="erroneous gene model prediction">
        <sequence resource="EMBL-CDS" id="BAB10240"/>
    </conflict>
</comment>
<keyword id="KW-0067">ATP-binding</keyword>
<keyword id="KW-0963">Cytoplasm</keyword>
<keyword id="KW-0347">Helicase</keyword>
<keyword id="KW-0378">Hydrolase</keyword>
<keyword id="KW-0479">Metal-binding</keyword>
<keyword id="KW-0866">Nonsense-mediated mRNA decay</keyword>
<keyword id="KW-0547">Nucleotide-binding</keyword>
<keyword id="KW-0597">Phosphoprotein</keyword>
<keyword id="KW-0611">Plant defense</keyword>
<keyword id="KW-1185">Reference proteome</keyword>
<keyword id="KW-0694">RNA-binding</keyword>
<keyword id="KW-0862">Zinc</keyword>
<keyword id="KW-0863">Zinc-finger</keyword>
<proteinExistence type="evidence at protein level"/>
<sequence>MDSQQSDLFDTASQPDTVADEYTFLEFNTQGDSEFDYQDFGSPTAWPTPSDSISIADVADRGEGGAAADHHSEASSPSSLSAGAGNGAKVGRGGVGGSGGVSSSSQVDALAAGVGNLNFEETGDDDGFDYGKNDFTEHACKYCGISNPACVVRCNVASCRKWFCNSRGNTSGSHIVNHLVRAKHKEVCLHRDSPLGETILECYNCGCRNVFLLGFISAKTDSVVVLLCRDPCLNVNALKDMNWDLSQWCPLIDDRCFLPWLVKVPSEQEQLRARQISAQQINKIEELWKTNPDATLEDLEKPGVDDEPQPVQPKYEDAYQYQNVFAPLIKLEADYDKMMKESQSKENLTVRWDIGLNKKRVAYFVFPKEENELRLVPGDELRLRYSGDAVHPSWQSVGHVIKLTAQEEVALELRANQGVPIDVNHGFSVDFVWKSTSFDRMQGAMKNFAVDETSVSGYIYHQLLGHEVEAQMVRNTLPRRFGVPGLPELNASQVNAVKSVLQKPISLIQGPPGTGKTVTSAAIVYHMAKQGQGQVLVCAPSNVAVDQLAEKISATGLKVVRLCAKSREAVSSPVEYLTLHYQVRHLDTSEKSELHKLQQLKDEQGELSSSDEKKYKNLKRATEREITQSADVICCTCVGAADLRLSNFRFRQVLIDESTQATEPECLIPLVLGVKQVVLVGDHCQLGPVIMCKKAARAGLAQSLFERLVTLGIKPIRLQVQYRMHPALSEFPSNSFYEGTLQNGVTIIERQTTGIDFPWPVPNRPMFFYVQLGQEEISASGTSYLNRTEAANVEKLVTAFLKSGVVPSQIGVITPYEGQRAYIVNYMARNGSLRQQLYKEIEVASVDSFQGREKDYIILSCVRSNEHQGIGFLNDPRRLNVALTRARYGIVILGNPKVLSKQPLWNGLLTHYKEHECLVEGPLNNLKQSMVQFQKPRKIYNDRRLFYGGGAGMIGNDNFGSGNPNADRRGSRGRAGGSYLPSGPPNGARPGLHPAGYPIPRVPLSPFPGGPPSQPYAIPTRGPVGAVPHAPQPGNHGFGAGRGTSVGGHLPHQQATQHNVGTIGPSLNFPLDSPNSQPSPGGPLSQPGYGSQAFRDGFSMGGISQDFLADDIKSQGSHDPYNMADFATQASPGGFAVDYATQGAHGAFPGNFMNQNSQGGYSRFSGINDFMSQEYMAHGGQGLFTQAGFIDSSQDDGQQNPYGVNNPNLQSQGLPNSLYSQPFAHYNTQPLNLSGPQQSQPNQSSQNPKHPYNG</sequence>
<accession>Q9FJR0</accession>
<accession>Q8S3K7</accession>
<evidence type="ECO:0000250" key="1">
    <source>
        <dbReference type="UniProtKB" id="Q92900"/>
    </source>
</evidence>
<evidence type="ECO:0000255" key="2">
    <source>
        <dbReference type="PROSITE-ProRule" id="PRU00541"/>
    </source>
</evidence>
<evidence type="ECO:0000255" key="3">
    <source>
        <dbReference type="PROSITE-ProRule" id="PRU01341"/>
    </source>
</evidence>
<evidence type="ECO:0000256" key="4">
    <source>
        <dbReference type="SAM" id="MobiDB-lite"/>
    </source>
</evidence>
<evidence type="ECO:0000269" key="5">
    <source>
    </source>
</evidence>
<evidence type="ECO:0000269" key="6">
    <source>
    </source>
</evidence>
<evidence type="ECO:0000269" key="7">
    <source>
    </source>
</evidence>
<evidence type="ECO:0000269" key="8">
    <source>
    </source>
</evidence>
<evidence type="ECO:0000269" key="9">
    <source>
    </source>
</evidence>
<evidence type="ECO:0000305" key="10"/>
<reference key="1">
    <citation type="journal article" date="1998" name="DNA Res.">
        <title>Structural analysis of Arabidopsis thaliana chromosome 5. VI. Sequence features of the regions of 1,367,185 bp covered by 19 physically assigned P1 and TAC clones.</title>
        <authorList>
            <person name="Kotani H."/>
            <person name="Nakamura Y."/>
            <person name="Sato S."/>
            <person name="Asamizu E."/>
            <person name="Kaneko T."/>
            <person name="Miyajima N."/>
            <person name="Tabata S."/>
        </authorList>
    </citation>
    <scope>NUCLEOTIDE SEQUENCE [LARGE SCALE GENOMIC DNA]</scope>
    <source>
        <strain>cv. Columbia</strain>
    </source>
</reference>
<reference key="2">
    <citation type="journal article" date="2017" name="Plant J.">
        <title>Araport11: a complete reannotation of the Arabidopsis thaliana reference genome.</title>
        <authorList>
            <person name="Cheng C.Y."/>
            <person name="Krishnakumar V."/>
            <person name="Chan A.P."/>
            <person name="Thibaud-Nissen F."/>
            <person name="Schobel S."/>
            <person name="Town C.D."/>
        </authorList>
    </citation>
    <scope>GENOME REANNOTATION</scope>
    <source>
        <strain>cv. Columbia</strain>
    </source>
</reference>
<reference key="3">
    <citation type="submission" date="2002-02" db="EMBL/GenBank/DDBJ databases">
        <title>Cloning of the Upf1 gene in Arabidopsis.</title>
        <authorList>
            <person name="Johzuka Y."/>
            <person name="Mulligan M.R."/>
        </authorList>
    </citation>
    <scope>NUCLEOTIDE SEQUENCE [MRNA] OF 12-1254</scope>
    <source>
        <strain>cv. Columbia</strain>
    </source>
</reference>
<reference key="4">
    <citation type="journal article" date="2009" name="Plant Cell">
        <title>Aberrant mRNA transcripts and the nonsense-mediated decay proteins UPF2 and UPF3 are enriched in the Arabidopsis nucleolus.</title>
        <authorList>
            <person name="Kim S.H."/>
            <person name="Koroleva O.A."/>
            <person name="Lewandowska D."/>
            <person name="Pendle A.F."/>
            <person name="Clark G.P."/>
            <person name="Simpson C.G."/>
            <person name="Shaw P.J."/>
            <person name="Brown J.W.S."/>
        </authorList>
    </citation>
    <scope>SUBCELLULAR LOCATION</scope>
</reference>
<reference key="5">
    <citation type="journal article" date="2009" name="Proc. Natl. Acad. Sci. U.S.A.">
        <title>Genome-wide suppression of aberrant mRNA-like noncoding RNAs by NMD in Arabidopsis.</title>
        <authorList>
            <person name="Kurihara Y."/>
            <person name="Matsui A."/>
            <person name="Hanada K."/>
            <person name="Kawashima M."/>
            <person name="Ishida J."/>
            <person name="Morosawa T."/>
            <person name="Tanaka M."/>
            <person name="Kaminuma E."/>
            <person name="Mochizuki Y."/>
            <person name="Matsushima A."/>
            <person name="Toyoda T."/>
            <person name="Shinozaki K."/>
            <person name="Seki M."/>
        </authorList>
    </citation>
    <scope>FUNCTION</scope>
    <scope>DISRUPTION PHENOTYPE</scope>
</reference>
<reference key="6">
    <citation type="journal article" date="2011" name="Plant Cell Physiol.">
        <title>Nonsense-mediated mRNA decay factors, UPF1 and UPF3, contribute to plant defense.</title>
        <authorList>
            <person name="Jeong H.-J."/>
            <person name="Kim Y.J."/>
            <person name="Kim S.H."/>
            <person name="Kim Y.-H."/>
            <person name="Lee I.-J."/>
            <person name="Kim Y.K."/>
            <person name="Shin J.S."/>
        </authorList>
    </citation>
    <scope>FUNCTION</scope>
    <scope>DISRUPTION PHENOTYPE</scope>
    <scope>DOWN-REGULATION BY PSEUDOMONAS SYRINGAE</scope>
    <source>
        <strain>cv. Columbia</strain>
    </source>
</reference>
<reference key="7">
    <citation type="journal article" date="2012" name="J. Integr. Plant Biol.">
        <title>Arabidopsis plants having defects in nonsense-mediated mRNA decay factors UPF1, UPF2, and UPF3 show photoperiod-dependent phenotypes in development and stress responses.</title>
        <authorList>
            <person name="Shi C."/>
            <person name="Baldwin I.T."/>
            <person name="Wu J."/>
        </authorList>
    </citation>
    <scope>FUNCTION</scope>
    <scope>DISRUPTION PHENOTYPE</scope>
    <source>
        <strain>cv. Columbia</strain>
    </source>
</reference>
<reference key="8">
    <citation type="journal article" date="2012" name="Nucleic Acids Res.">
        <title>Alternative splicing and nonsense-mediated decay modulate expression of important regulatory genes in Arabidopsis.</title>
        <authorList>
            <person name="Kalyna M."/>
            <person name="Simpson C.G."/>
            <person name="Syed N.H."/>
            <person name="Lewandowska D."/>
            <person name="Marquez Y."/>
            <person name="Kusenda B."/>
            <person name="Marshall J."/>
            <person name="Fuller J."/>
            <person name="Cardle L."/>
            <person name="McNicol J."/>
            <person name="Dinh H.Q."/>
            <person name="Barta A."/>
            <person name="Brown J.W.S."/>
        </authorList>
    </citation>
    <scope>FUNCTION</scope>
    <scope>DISRUPTION PHENOTYPE</scope>
    <source>
        <strain>cv. Columbia</strain>
    </source>
</reference>
<reference key="9">
    <citation type="journal article" date="2013" name="PLoS ONE">
        <title>Genome-wide comparative in silico analysis of the RNA helicase gene family in Zea mays and Glycine max: a comparison with Arabidopsis and Oryza sativa.</title>
        <authorList>
            <person name="Xu R."/>
            <person name="Zhang S."/>
            <person name="Huang J."/>
            <person name="Zheng C."/>
        </authorList>
    </citation>
    <scope>GENE FAMILY</scope>
</reference>
<reference key="10">
    <citation type="journal article" date="2013" name="Plant J.">
        <title>The late steps of plant nonsense-mediated mRNA decay.</title>
        <authorList>
            <person name="Merai Z."/>
            <person name="Benkovics A.H."/>
            <person name="Nyiko T."/>
            <person name="Debreczeny M."/>
            <person name="Hiripi L."/>
            <person name="Kerenyi Z."/>
            <person name="Kondorosi E."/>
            <person name="Silhavy D."/>
        </authorList>
    </citation>
    <scope>FUNCTION</scope>
    <scope>MUTAGENESIS OF ARG-852</scope>
    <scope>SUBCELLULAR LOCATION</scope>
    <scope>DOMAINS</scope>
    <scope>PHOSPHORYLATION</scope>
</reference>
<protein>
    <recommendedName>
        <fullName>Regulator of nonsense transcripts 1 homolog</fullName>
        <ecNumber evidence="1">3.6.4.12</ecNumber>
        <ecNumber evidence="1">3.6.4.13</ecNumber>
    </recommendedName>
    <alternativeName>
        <fullName>ATP-dependent helicase UPF1</fullName>
    </alternativeName>
</protein>
<feature type="chain" id="PRO_0000080721" description="Regulator of nonsense transcripts 1 homolog">
    <location>
        <begin position="1"/>
        <end position="1254"/>
    </location>
</feature>
<feature type="domain" description="Upf1 CH-rich" evidence="3">
    <location>
        <begin position="132"/>
        <end position="291"/>
    </location>
</feature>
<feature type="domain" description="Helicase ATP-binding" evidence="2">
    <location>
        <begin position="497"/>
        <end position="629"/>
    </location>
</feature>
<feature type="region of interest" description="S/TQ motifs-rich, involved in the target transcript degradation steps of nonsense-mediated decay (NMD)">
    <location>
        <begin position="1"/>
        <end position="106"/>
    </location>
</feature>
<feature type="region of interest" description="Disordered" evidence="4">
    <location>
        <begin position="1"/>
        <end position="21"/>
    </location>
</feature>
<feature type="region of interest" description="Disordered" evidence="4">
    <location>
        <begin position="33"/>
        <end position="52"/>
    </location>
</feature>
<feature type="region of interest" description="Disordered" evidence="4">
    <location>
        <begin position="61"/>
        <end position="102"/>
    </location>
</feature>
<feature type="region of interest" description="C3H" evidence="3">
    <location>
        <begin position="140"/>
        <end position="174"/>
    </location>
</feature>
<feature type="region of interest" description="CC/SHH/C" evidence="3">
    <location>
        <begin position="154"/>
        <end position="184"/>
    </location>
</feature>
<feature type="region of interest" description="C4" evidence="3">
    <location>
        <begin position="202"/>
        <end position="232"/>
    </location>
</feature>
<feature type="region of interest" description="Disordered" evidence="4">
    <location>
        <begin position="956"/>
        <end position="1096"/>
    </location>
</feature>
<feature type="region of interest" description="S/TQ motifs-rich, involved in the target transcript degradation steps of nonsense-mediated decay (NMD)">
    <location>
        <begin position="1013"/>
        <end position="1254"/>
    </location>
</feature>
<feature type="region of interest" description="Disordered" evidence="4">
    <location>
        <begin position="1187"/>
        <end position="1254"/>
    </location>
</feature>
<feature type="compositionally biased region" description="Polar residues" evidence="4">
    <location>
        <begin position="1"/>
        <end position="16"/>
    </location>
</feature>
<feature type="compositionally biased region" description="Basic and acidic residues" evidence="4">
    <location>
        <begin position="61"/>
        <end position="73"/>
    </location>
</feature>
<feature type="compositionally biased region" description="Low complexity" evidence="4">
    <location>
        <begin position="74"/>
        <end position="83"/>
    </location>
</feature>
<feature type="compositionally biased region" description="Gly residues" evidence="4">
    <location>
        <begin position="84"/>
        <end position="100"/>
    </location>
</feature>
<feature type="compositionally biased region" description="Pro residues" evidence="4">
    <location>
        <begin position="1000"/>
        <end position="1014"/>
    </location>
</feature>
<feature type="compositionally biased region" description="Gly residues" evidence="4">
    <location>
        <begin position="1036"/>
        <end position="1046"/>
    </location>
</feature>
<feature type="compositionally biased region" description="Low complexity" evidence="4">
    <location>
        <begin position="1073"/>
        <end position="1092"/>
    </location>
</feature>
<feature type="compositionally biased region" description="Polar residues" evidence="4">
    <location>
        <begin position="1191"/>
        <end position="1235"/>
    </location>
</feature>
<feature type="compositionally biased region" description="Low complexity" evidence="4">
    <location>
        <begin position="1236"/>
        <end position="1248"/>
    </location>
</feature>
<feature type="binding site" evidence="3">
    <location>
        <position position="140"/>
    </location>
    <ligand>
        <name>Zn(2+)</name>
        <dbReference type="ChEBI" id="CHEBI:29105"/>
        <label>1</label>
    </ligand>
</feature>
<feature type="binding site" evidence="3">
    <location>
        <position position="143"/>
    </location>
    <ligand>
        <name>Zn(2+)</name>
        <dbReference type="ChEBI" id="CHEBI:29105"/>
        <label>1</label>
    </ligand>
</feature>
<feature type="binding site" evidence="3">
    <location>
        <position position="154"/>
    </location>
    <ligand>
        <name>Zn(2+)</name>
        <dbReference type="ChEBI" id="CHEBI:29105"/>
        <label>2</label>
    </ligand>
</feature>
<feature type="binding site" evidence="3">
    <location>
        <position position="159"/>
    </location>
    <ligand>
        <name>Zn(2+)</name>
        <dbReference type="ChEBI" id="CHEBI:29105"/>
        <label>2</label>
    </ligand>
</feature>
<feature type="binding site" evidence="3">
    <location>
        <position position="164"/>
    </location>
    <ligand>
        <name>Zn(2+)</name>
        <dbReference type="ChEBI" id="CHEBI:29105"/>
        <label>1</label>
    </ligand>
</feature>
<feature type="binding site" evidence="3">
    <location>
        <position position="174"/>
    </location>
    <ligand>
        <name>Zn(2+)</name>
        <dbReference type="ChEBI" id="CHEBI:29105"/>
        <label>1</label>
    </ligand>
</feature>
<feature type="binding site" evidence="3">
    <location>
        <position position="178"/>
    </location>
    <ligand>
        <name>Zn(2+)</name>
        <dbReference type="ChEBI" id="CHEBI:29105"/>
        <label>2</label>
    </ligand>
</feature>
<feature type="binding site" evidence="3">
    <location>
        <position position="184"/>
    </location>
    <ligand>
        <name>Zn(2+)</name>
        <dbReference type="ChEBI" id="CHEBI:29105"/>
        <label>2</label>
    </ligand>
</feature>
<feature type="binding site" evidence="3">
    <location>
        <position position="202"/>
    </location>
    <ligand>
        <name>Zn(2+)</name>
        <dbReference type="ChEBI" id="CHEBI:29105"/>
        <label>3</label>
    </ligand>
</feature>
<feature type="binding site" evidence="3">
    <location>
        <position position="205"/>
    </location>
    <ligand>
        <name>Zn(2+)</name>
        <dbReference type="ChEBI" id="CHEBI:29105"/>
        <label>3</label>
    </ligand>
</feature>
<feature type="binding site" evidence="3">
    <location>
        <position position="228"/>
    </location>
    <ligand>
        <name>Zn(2+)</name>
        <dbReference type="ChEBI" id="CHEBI:29105"/>
        <label>3</label>
    </ligand>
</feature>
<feature type="binding site" evidence="3">
    <location>
        <position position="232"/>
    </location>
    <ligand>
        <name>Zn(2+)</name>
        <dbReference type="ChEBI" id="CHEBI:29105"/>
        <label>3</label>
    </ligand>
</feature>
<feature type="binding site" evidence="1">
    <location>
        <position position="493"/>
    </location>
    <ligand>
        <name>ATP</name>
        <dbReference type="ChEBI" id="CHEBI:30616"/>
    </ligand>
</feature>
<feature type="binding site" evidence="2">
    <location>
        <begin position="513"/>
        <end position="517"/>
    </location>
    <ligand>
        <name>ATP</name>
        <dbReference type="ChEBI" id="CHEBI:30616"/>
    </ligand>
</feature>
<feature type="binding site" evidence="1">
    <location>
        <position position="685"/>
    </location>
    <ligand>
        <name>ATP</name>
        <dbReference type="ChEBI" id="CHEBI:30616"/>
    </ligand>
</feature>
<feature type="binding site" evidence="1">
    <location>
        <position position="722"/>
    </location>
    <ligand>
        <name>ATP</name>
        <dbReference type="ChEBI" id="CHEBI:30616"/>
    </ligand>
</feature>
<feature type="binding site" evidence="1">
    <location>
        <position position="853"/>
    </location>
    <ligand>
        <name>ATP</name>
        <dbReference type="ChEBI" id="CHEBI:30616"/>
    </ligand>
</feature>
<feature type="mutagenesis site" description="Abolishes NMD." evidence="9">
    <original>R</original>
    <variation>C</variation>
    <location>
        <position position="852"/>
    </location>
</feature>
<dbReference type="EC" id="3.6.4.12" evidence="1"/>
<dbReference type="EC" id="3.6.4.13" evidence="1"/>
<dbReference type="EMBL" id="AB013394">
    <property type="protein sequence ID" value="BAB10240.1"/>
    <property type="status" value="ALT_SEQ"/>
    <property type="molecule type" value="Genomic_DNA"/>
</dbReference>
<dbReference type="EMBL" id="CP002688">
    <property type="protein sequence ID" value="AED95457.1"/>
    <property type="molecule type" value="Genomic_DNA"/>
</dbReference>
<dbReference type="EMBL" id="AF484122">
    <property type="protein sequence ID" value="AAL92018.1"/>
    <property type="molecule type" value="mRNA"/>
</dbReference>
<dbReference type="RefSeq" id="NP_199512.2">
    <property type="nucleotide sequence ID" value="NM_124072.3"/>
</dbReference>
<dbReference type="SMR" id="Q9FJR0"/>
<dbReference type="BioGRID" id="19995">
    <property type="interactions" value="1"/>
</dbReference>
<dbReference type="FunCoup" id="Q9FJR0">
    <property type="interactions" value="5311"/>
</dbReference>
<dbReference type="STRING" id="3702.Q9FJR0"/>
<dbReference type="GlyGen" id="Q9FJR0">
    <property type="glycosylation" value="1 site"/>
</dbReference>
<dbReference type="iPTMnet" id="Q9FJR0"/>
<dbReference type="PaxDb" id="3702-AT5G47010.1"/>
<dbReference type="ProteomicsDB" id="236258"/>
<dbReference type="EnsemblPlants" id="AT5G47010.1">
    <property type="protein sequence ID" value="AT5G47010.1"/>
    <property type="gene ID" value="AT5G47010"/>
</dbReference>
<dbReference type="GeneID" id="834747"/>
<dbReference type="Gramene" id="AT5G47010.1">
    <property type="protein sequence ID" value="AT5G47010.1"/>
    <property type="gene ID" value="AT5G47010"/>
</dbReference>
<dbReference type="KEGG" id="ath:AT5G47010"/>
<dbReference type="Araport" id="AT5G47010"/>
<dbReference type="TAIR" id="AT5G47010">
    <property type="gene designation" value="LBA1"/>
</dbReference>
<dbReference type="eggNOG" id="KOG1802">
    <property type="taxonomic scope" value="Eukaryota"/>
</dbReference>
<dbReference type="HOGENOM" id="CLU_001666_4_3_1"/>
<dbReference type="InParanoid" id="Q9FJR0"/>
<dbReference type="OMA" id="QYMQMNG"/>
<dbReference type="OrthoDB" id="6513042at2759"/>
<dbReference type="PhylomeDB" id="Q9FJR0"/>
<dbReference type="CD-CODE" id="4299E36E">
    <property type="entry name" value="Nucleolus"/>
</dbReference>
<dbReference type="CD-CODE" id="60F64496">
    <property type="entry name" value="P-body"/>
</dbReference>
<dbReference type="PRO" id="PR:Q9FJR0"/>
<dbReference type="Proteomes" id="UP000006548">
    <property type="component" value="Chromosome 5"/>
</dbReference>
<dbReference type="ExpressionAtlas" id="Q9FJR0">
    <property type="expression patterns" value="baseline and differential"/>
</dbReference>
<dbReference type="GO" id="GO:0005737">
    <property type="term" value="C:cytoplasm"/>
    <property type="evidence" value="ECO:0000314"/>
    <property type="project" value="UniProtKB"/>
</dbReference>
<dbReference type="GO" id="GO:0005829">
    <property type="term" value="C:cytosol"/>
    <property type="evidence" value="ECO:0000314"/>
    <property type="project" value="TAIR"/>
</dbReference>
<dbReference type="GO" id="GO:0000932">
    <property type="term" value="C:P-body"/>
    <property type="evidence" value="ECO:0000314"/>
    <property type="project" value="TAIR"/>
</dbReference>
<dbReference type="GO" id="GO:0009506">
    <property type="term" value="C:plasmodesma"/>
    <property type="evidence" value="ECO:0007005"/>
    <property type="project" value="TAIR"/>
</dbReference>
<dbReference type="GO" id="GO:0005524">
    <property type="term" value="F:ATP binding"/>
    <property type="evidence" value="ECO:0007669"/>
    <property type="project" value="UniProtKB-KW"/>
</dbReference>
<dbReference type="GO" id="GO:0016887">
    <property type="term" value="F:ATP hydrolysis activity"/>
    <property type="evidence" value="ECO:0007669"/>
    <property type="project" value="RHEA"/>
</dbReference>
<dbReference type="GO" id="GO:0003677">
    <property type="term" value="F:DNA binding"/>
    <property type="evidence" value="ECO:0007669"/>
    <property type="project" value="InterPro"/>
</dbReference>
<dbReference type="GO" id="GO:0003729">
    <property type="term" value="F:mRNA binding"/>
    <property type="evidence" value="ECO:0007005"/>
    <property type="project" value="TAIR"/>
</dbReference>
<dbReference type="GO" id="GO:0003724">
    <property type="term" value="F:RNA helicase activity"/>
    <property type="evidence" value="ECO:0007669"/>
    <property type="project" value="InterPro"/>
</dbReference>
<dbReference type="GO" id="GO:0008270">
    <property type="term" value="F:zinc ion binding"/>
    <property type="evidence" value="ECO:0007669"/>
    <property type="project" value="UniProtKB-KW"/>
</dbReference>
<dbReference type="GO" id="GO:0042742">
    <property type="term" value="P:defense response to bacterium"/>
    <property type="evidence" value="ECO:0000315"/>
    <property type="project" value="UniProtKB"/>
</dbReference>
<dbReference type="GO" id="GO:0009867">
    <property type="term" value="P:jasmonic acid mediated signaling pathway"/>
    <property type="evidence" value="ECO:0000315"/>
    <property type="project" value="UniProtKB"/>
</dbReference>
<dbReference type="GO" id="GO:0048571">
    <property type="term" value="P:long-day photoperiodism"/>
    <property type="evidence" value="ECO:0000315"/>
    <property type="project" value="UniProtKB"/>
</dbReference>
<dbReference type="GO" id="GO:0000184">
    <property type="term" value="P:nuclear-transcribed mRNA catabolic process, nonsense-mediated decay"/>
    <property type="evidence" value="ECO:0000315"/>
    <property type="project" value="UniProtKB"/>
</dbReference>
<dbReference type="GO" id="GO:0009611">
    <property type="term" value="P:response to wounding"/>
    <property type="evidence" value="ECO:0000315"/>
    <property type="project" value="UniProtKB"/>
</dbReference>
<dbReference type="GO" id="GO:0008380">
    <property type="term" value="P:RNA splicing"/>
    <property type="evidence" value="ECO:0000315"/>
    <property type="project" value="TAIR"/>
</dbReference>
<dbReference type="GO" id="GO:0009863">
    <property type="term" value="P:salicylic acid mediated signaling pathway"/>
    <property type="evidence" value="ECO:0000315"/>
    <property type="project" value="UniProtKB"/>
</dbReference>
<dbReference type="GO" id="GO:0010182">
    <property type="term" value="P:sugar mediated signaling pathway"/>
    <property type="evidence" value="ECO:0000315"/>
    <property type="project" value="TAIR"/>
</dbReference>
<dbReference type="GO" id="GO:0006412">
    <property type="term" value="P:translation"/>
    <property type="evidence" value="ECO:0000315"/>
    <property type="project" value="TAIR"/>
</dbReference>
<dbReference type="CDD" id="cd21407">
    <property type="entry name" value="1B_UPF1-like"/>
    <property type="match status" value="1"/>
</dbReference>
<dbReference type="CDD" id="cd18039">
    <property type="entry name" value="DEXXQc_UPF1"/>
    <property type="match status" value="1"/>
</dbReference>
<dbReference type="CDD" id="cd18808">
    <property type="entry name" value="SF1_C_Upf1"/>
    <property type="match status" value="1"/>
</dbReference>
<dbReference type="CDD" id="cd21400">
    <property type="entry name" value="ZBD_UPF1-like"/>
    <property type="match status" value="1"/>
</dbReference>
<dbReference type="FunFam" id="3.40.50.300:FF:000097">
    <property type="entry name" value="Regulator of nonsense transcripts 1"/>
    <property type="match status" value="1"/>
</dbReference>
<dbReference type="FunFam" id="2.40.30.230:FF:000002">
    <property type="entry name" value="regulator of nonsense transcripts 1 homolog"/>
    <property type="match status" value="1"/>
</dbReference>
<dbReference type="Gene3D" id="2.40.30.230">
    <property type="match status" value="1"/>
</dbReference>
<dbReference type="Gene3D" id="6.10.140.1240">
    <property type="match status" value="1"/>
</dbReference>
<dbReference type="Gene3D" id="3.40.50.300">
    <property type="entry name" value="P-loop containing nucleotide triphosphate hydrolases"/>
    <property type="match status" value="2"/>
</dbReference>
<dbReference type="InterPro" id="IPR045055">
    <property type="entry name" value="DNA2/NAM7-like"/>
</dbReference>
<dbReference type="InterPro" id="IPR041679">
    <property type="entry name" value="DNA2/NAM7-like_C"/>
</dbReference>
<dbReference type="InterPro" id="IPR041677">
    <property type="entry name" value="DNA2/NAM7_AAA_11"/>
</dbReference>
<dbReference type="InterPro" id="IPR006935">
    <property type="entry name" value="Helicase/UvrB_N"/>
</dbReference>
<dbReference type="InterPro" id="IPR014001">
    <property type="entry name" value="Helicase_ATP-bd"/>
</dbReference>
<dbReference type="InterPro" id="IPR027417">
    <property type="entry name" value="P-loop_NTPase"/>
</dbReference>
<dbReference type="InterPro" id="IPR047187">
    <property type="entry name" value="SF1_C_Upf1"/>
</dbReference>
<dbReference type="InterPro" id="IPR040812">
    <property type="entry name" value="UPF1_1B_dom"/>
</dbReference>
<dbReference type="InterPro" id="IPR018999">
    <property type="entry name" value="UPF1_CH/ZBD"/>
</dbReference>
<dbReference type="PANTHER" id="PTHR10887">
    <property type="entry name" value="DNA2/NAM7 HELICASE FAMILY"/>
    <property type="match status" value="1"/>
</dbReference>
<dbReference type="PANTHER" id="PTHR10887:SF364">
    <property type="entry name" value="REGULATOR OF NONSENSE TRANSCRIPTS 1"/>
    <property type="match status" value="1"/>
</dbReference>
<dbReference type="Pfam" id="PF13086">
    <property type="entry name" value="AAA_11"/>
    <property type="match status" value="1"/>
</dbReference>
<dbReference type="Pfam" id="PF13087">
    <property type="entry name" value="AAA_12"/>
    <property type="match status" value="1"/>
</dbReference>
<dbReference type="Pfam" id="PF04851">
    <property type="entry name" value="ResIII"/>
    <property type="match status" value="1"/>
</dbReference>
<dbReference type="Pfam" id="PF18141">
    <property type="entry name" value="UPF1_1B_dom"/>
    <property type="match status" value="1"/>
</dbReference>
<dbReference type="Pfam" id="PF09416">
    <property type="entry name" value="UPF1_Zn_bind"/>
    <property type="match status" value="1"/>
</dbReference>
<dbReference type="SUPFAM" id="SSF52540">
    <property type="entry name" value="P-loop containing nucleoside triphosphate hydrolases"/>
    <property type="match status" value="1"/>
</dbReference>
<dbReference type="PROSITE" id="PS51192">
    <property type="entry name" value="HELICASE_ATP_BIND_1"/>
    <property type="match status" value="1"/>
</dbReference>
<dbReference type="PROSITE" id="PS51997">
    <property type="entry name" value="UPF1_CH_RICH"/>
    <property type="match status" value="1"/>
</dbReference>
<name>RENT1_ARATH</name>